<feature type="chain" id="PRO_0000065656" description="Tuberin">
    <location>
        <begin position="1"/>
        <end position="1809"/>
    </location>
</feature>
<feature type="domain" description="Rap-GAP" evidence="3">
    <location>
        <begin position="1533"/>
        <end position="1760"/>
    </location>
</feature>
<feature type="region of interest" description="Disordered" evidence="4">
    <location>
        <begin position="1078"/>
        <end position="1136"/>
    </location>
</feature>
<feature type="region of interest" description="Disordered" evidence="4">
    <location>
        <begin position="1330"/>
        <end position="1359"/>
    </location>
</feature>
<feature type="region of interest" description="Disordered" evidence="4">
    <location>
        <begin position="1373"/>
        <end position="1392"/>
    </location>
</feature>
<feature type="region of interest" description="Disordered" evidence="4">
    <location>
        <begin position="1405"/>
        <end position="1492"/>
    </location>
</feature>
<feature type="region of interest" description="Disordered" evidence="4">
    <location>
        <begin position="1764"/>
        <end position="1793"/>
    </location>
</feature>
<feature type="compositionally biased region" description="Low complexity" evidence="4">
    <location>
        <begin position="1078"/>
        <end position="1097"/>
    </location>
</feature>
<feature type="compositionally biased region" description="Low complexity" evidence="4">
    <location>
        <begin position="1376"/>
        <end position="1392"/>
    </location>
</feature>
<feature type="compositionally biased region" description="Basic and acidic residues" evidence="4">
    <location>
        <begin position="1405"/>
        <end position="1418"/>
    </location>
</feature>
<feature type="compositionally biased region" description="Low complexity" evidence="4">
    <location>
        <begin position="1449"/>
        <end position="1464"/>
    </location>
</feature>
<feature type="modified residue" description="Phosphoserine" evidence="1">
    <location>
        <position position="540"/>
    </location>
</feature>
<feature type="modified residue" description="Phosphoserine" evidence="1">
    <location>
        <position position="664"/>
    </location>
</feature>
<feature type="modified residue" description="Phosphothreonine" evidence="1">
    <location>
        <position position="927"/>
    </location>
</feature>
<feature type="modified residue" description="Phosphoserine; by PKB/AKT1" evidence="6">
    <location>
        <position position="939"/>
    </location>
</feature>
<feature type="modified residue" description="Phosphoserine" evidence="1">
    <location>
        <position position="981"/>
    </location>
</feature>
<feature type="modified residue" description="Phosphoserine; by PKB/AKT1" evidence="6">
    <location>
        <position position="1130"/>
    </location>
</feature>
<feature type="modified residue" description="Phosphoserine; by PKB/AKT1" evidence="6">
    <location>
        <position position="1132"/>
    </location>
</feature>
<feature type="modified residue" description="Phosphoserine" evidence="1">
    <location>
        <position position="1155"/>
    </location>
</feature>
<feature type="modified residue" description="Phosphothreonine" evidence="1">
    <location>
        <position position="1271"/>
    </location>
</feature>
<feature type="modified residue" description="Phosphoserine" evidence="1">
    <location>
        <position position="1340"/>
    </location>
</feature>
<feature type="modified residue" description="Phosphoserine" evidence="1">
    <location>
        <position position="1341"/>
    </location>
</feature>
<feature type="modified residue" description="Phosphoserine" evidence="1">
    <location>
        <position position="1349"/>
    </location>
</feature>
<feature type="modified residue" description="Phosphoserine" evidence="1">
    <location>
        <position position="1366"/>
    </location>
</feature>
<feature type="modified residue" description="Phosphoserine" evidence="14">
    <location>
        <position position="1389"/>
    </location>
</feature>
<feature type="modified residue" description="Phosphoserine" evidence="14">
    <location>
        <position position="1413"/>
    </location>
</feature>
<feature type="modified residue" description="Phosphoserine" evidence="1">
    <location>
        <position position="1420"/>
    </location>
</feature>
<feature type="modified residue" description="Phosphoserine" evidence="6">
    <location>
        <position position="1422"/>
    </location>
</feature>
<feature type="modified residue" description="Phosphoserine" evidence="1">
    <location>
        <position position="1456"/>
    </location>
</feature>
<feature type="modified residue" description="Phosphothreonine; by PKB/AKT1" evidence="6">
    <location>
        <position position="1466"/>
    </location>
</feature>
<feature type="modified residue" description="Phosphoserine" evidence="2">
    <location>
        <position position="1766"/>
    </location>
</feature>
<feature type="modified residue" description="Phosphoserine; by RPS6KA1" evidence="1">
    <location>
        <position position="1800"/>
    </location>
</feature>
<feature type="modified residue" description="Phosphoserine" evidence="1">
    <location>
        <position position="1801"/>
    </location>
</feature>
<feature type="splice variant" id="VSP_004481" description="In isoform 2 and isoform 4." evidence="10">
    <location>
        <begin position="947"/>
        <end position="989"/>
    </location>
</feature>
<feature type="splice variant" id="VSP_004482" description="In isoform 3 and isoform 4." evidence="10">
    <location>
        <begin position="1272"/>
        <end position="1294"/>
    </location>
</feature>
<feature type="mutagenesis site" description="In chemically induced renal carcinoma." evidence="5">
    <original>N</original>
    <variation>S</variation>
    <location>
        <position position="314"/>
    </location>
</feature>
<feature type="mutagenesis site" description="In chemically induced renal carcinoma." evidence="5">
    <original>L</original>
    <variation>R</variation>
    <location>
        <position position="713"/>
    </location>
</feature>
<feature type="mutagenesis site" description="Decreased phosphorylation by PKB/AKT1; when associated with A-1130--1132-A and A-1422." evidence="6">
    <original>S</original>
    <variation>A</variation>
    <location>
        <position position="939"/>
    </location>
</feature>
<feature type="mutagenesis site" description="Mimics phosphorylation, leading to inhibit the ability of TSC2 to suppress mTORC1 signaling; when associated with D-1130--1132-E." evidence="6">
    <original>S</original>
    <variation>D</variation>
    <location>
        <position position="939"/>
    </location>
</feature>
<feature type="mutagenesis site" description="Decreased phosphorylation by PKB/AKT1; when associated with A-939 and A-1422." evidence="6">
    <original>SMS</original>
    <variation>AMA</variation>
    <location>
        <begin position="1130"/>
        <end position="1132"/>
    </location>
</feature>
<feature type="mutagenesis site" description="Mimics phosphorylation, leading to inhibit the ability of TSC2 to suppress mTORC1 signaling; when associated with D-939." evidence="6">
    <original>SMS</original>
    <variation>DME</variation>
    <location>
        <begin position="1130"/>
        <end position="1132"/>
    </location>
</feature>
<feature type="mutagenesis site" description="Decreased phosphorylation by PKB/AKT1; when associated with A-939 and A-1130--1132-A." evidence="6">
    <original>S</original>
    <variation>A</variation>
    <location>
        <position position="1422"/>
    </location>
</feature>
<feature type="sequence conflict" description="In Ref. 2; BAA08914." evidence="12" ref="2">
    <original>K</original>
    <variation>S</variation>
    <location>
        <position position="932"/>
    </location>
</feature>
<feature type="sequence conflict" description="In Ref. 2; BAA08914." evidence="12" ref="2">
    <original>C</original>
    <variation>F</variation>
    <location>
        <position position="1514"/>
    </location>
</feature>
<feature type="sequence conflict" description="In Ref. 2; BAA08914." evidence="12" ref="2">
    <original>R</original>
    <variation>S</variation>
    <location>
        <position position="1730"/>
    </location>
</feature>
<proteinExistence type="evidence at protein level"/>
<sequence>MAKPTSKDSGLKEKFKILLGLGTSRPNPRCAEGKQTEFIITAEILRELSGECGLNNRIRMIGQICDVAKTKKLEEHAVEALWKAVSDLLQPERPPEARHAVLALLKAIVQGQGDRLGVLRALFFKVIKDYPSNEDLHERLEVFKALTDNGRHITYLEEELAEFVLQWMDVGLSSEFLLVLVNLVKFNSCYLDEYIAPMVHMICLLCIRTVSSVDIEVSLQVLDAVVCYNCLPAESLPLFIITLCRTVNVKELCEPCWKLMRNLLGTHLGHSAIYNMCRIMENRSYMEDAPLLRGAVFFVGMALWGAHRLYSLKNSPTSVLPSFYEAMTCPNEVVSYEIVLSITRLIKKYRKELQAVTWDILLDIIERLLQQLQNLDSPELRTIVHDLLTTVEELCDQNEFHGSQERYYELVESYADQRPESSLLNLITYRAQSIHPAKDGWIQNLQLLMERFFRNECRSAVRIKVLDVLSFVLLINRQFYEEELINSVVISQLSHIPEDKDHQVRKLATQLLVDLAEGCHTHHFNSLLDIIEKVMARSLSPPLELEERDLAVYSASLEDVKTAVLGLLVILQTKLYTLPASHATRVYETLISHIQLHYKHGYSLPIASSIRLQAFDFLLLLRADSLHRLGLPNKDGVVRFSPYCLCDCAELDRASEKKASGPLSPPTGPPSPVPTGPAVRLGHLPYSLLFRVLLQCLKQETDWKVLKLVLSKLPESLRYKVLIFTSPCSVDQLSSALCSMLSAPKTLERLRGTPEGFSRTDLHLAVVPVLTALISYHNYLDKTRQREMVYCLEQGLIYRCASQCVVALAICSVEMPDIIIKALPVLVVKLTHISATASMAIPLLEFLSTLARLPHLYRNFAAEQYASVFAISLPYTNPSKFNQYIVCLAHHVIAMWFIRCRLPFRKDFVPYITKGLRSNVLLSFDDTPEKDKFRARSTSLNERPKSLRIARAPKQGLNNSPPVKEFKESCAAEAFRCRSISVSEHVVRSRIQTSLTSASLGSADENSMAQADDNLKNLHLELTETCLDMMARYVFSNFTAVPKRSPVGEFLLAGGRTKTWLVGNKLVTVTTSVGTGTRSLLGLDSGDLQGGSASSSDPGTHVRQTKEAPAKLESQAGQQVSRGARDRVRSMSGGHGLRVGVLDTSAPYTPGGPASLGAQAAPAARPEKPCAGAQLPAAEKANLAAYVPLLTQGWAEILVRRPTGNTSWLMSLENPLSPFSSDINNMPLQELSNALMAAERFKEHRDTALYKSLSVPAAGTAKPPTLPRSNTVASFSSLYQPSCQGQLHRSVSWADSAVVLEEGSPGEAHVPVEPPELEDFEAALGTDRHCQRPDAYSRSSSASSQEEKSHLEELAAGGIPIERAISSEGARPTVDLSFQPSQPLSKSSSSPELQTLQDILGDLGDKTDIGRLSPEAKVRSQSGILDGEAATWSAPGEESRITVPPEGPLPSSSPRSPSGLRPRGYTISDSAPSRRGKRVERDNFKSRTAASSAEKVPGINPSFVFLQLYHSPFCGDESNKPILLPNESFERSVQLLDQIPSYDTHKIAVLYVGEGQSSSELAILSNEHGSYRYTEFLTGLGRLIELKDCQPDKVYLGGLDVCGEDGQFTYCWHDDIMQAVFHIATLMPTKDVDKHRCDKKRHLGNDFVSIIYNDSGEDFKLGTIKGQFNFVHVIITPLDYKCNLLTLQCRKDMEGLVDTSVAKIVSDRNLSFVARQMALHANMASQVHHRRSNPTDIYPSKWIARLRHIKRLRQRIREEVHYSNPSLPLMHPPAHTKVPAQAPTEATPTYETGQRKRLISSVDDFTEFV</sequence>
<comment type="function">
    <text evidence="1 6 7 9">Catalytic component of the TSC-TBC complex, a multiprotein complex that acts as a negative regulator of the canonical mTORC1 complex, an evolutionarily conserved central nutrient sensor that stimulates anabolic reactions and macromolecule biosynthesis to promote cellular biomass generation and growth (PubMed:12172553). Within the TSC-TBC complex, TSC2 acts as a GTPase-activating protein (GAP) for the small GTPase RHEB, a direct activator of the protein kinase activity of mTORC1 (By similarity). In absence of nutrients, the TSC-TBC complex inhibits mTORC1, thereby preventing phosphorylation of ribosomal protein S6 kinase (RPS6KB1 and RPS6KB2) and EIF4EBP1 (4E-BP1) by the mTORC1 signaling (By similarity). The TSC-TBC complex is inactivated in response to nutrients, relieving inhibition of mTORC1 (By similarity). Involved in microtubule-mediated protein transport via its ability to regulate mTORC1 signaling (PubMed:16707451). Also stimulates the intrinsic GTPase activity of the Ras-related proteins RAP1A and RAB5 (PubMed:9045618).</text>
</comment>
<comment type="subunit">
    <text evidence="1 9">Component of the TSC-TBC complex (also named Rhebulator complex), composed of 2 molecules of TSC1, 2 molecules of TSC2 and 1 molecule of TBC1D7 (By similarity). Probably forms a complex composed of chaperones HSP90 and HSP70, co-chaperones STIP1/HOP, CDC37, PPP5C, PTGES3/p23, TSC1 and client protein TSC2 (By similarity). Probably forms a complex composed of chaperones HSP90 and HSP70, co-chaperones CDC37, PPP5C, TSC1 and client protein TSC2, CDK4, AKT, RAF1 and NR3C1; this complex does not contain co-chaperones STIP1/HOP and PTGES3/p23 (By similarity). Forms a complex containing HSP90AA1, TSC1 and TSC2; TSC1 is required to recruit TCS2 to the complex thereby stabilizing TSC2 (By similarity). Interacts with TSC1 and HERC1; the interaction with TSC1 stabilizes TSC2 and prevents the interaction with HERC1 (By similarity). May also interact with the adapter molecule RABEP1 (PubMed:9045618). The final complex may contain TSC2 and RABEP1 linked to RAB5 (PubMed:9045618). Interacts with HSPA1 and HSPA8 (By similarity). Interacts with NAA10 (via C-terminal domain) (By similarity). Interacts with RRAGA (polyubiquitinated) (By similarity). Interacts with WDR45B (By similarity). Interacts with RPAP3 and URI1 (By similarity). Interacts with YWHAG (By similarity). Interacts with RHEB (By similarity).</text>
</comment>
<comment type="subcellular location">
    <subcellularLocation>
        <location evidence="1">Lysosome membrane</location>
        <topology evidence="1">Peripheral membrane protein</topology>
    </subcellularLocation>
    <subcellularLocation>
        <location evidence="1">Cytoplasm</location>
        <location evidence="1">Cytosol</location>
    </subcellularLocation>
    <text evidence="1">Recruited to lysosomal membranes in a RHEB-dependent process in absence of nutrients (By similarity). In response to insulin signaling and phosphorylation by PKB/AKT1, the complex dissociates from lysosomal membranes and relocalizes to the cytosol (By similarity).</text>
</comment>
<comment type="alternative products">
    <event type="alternative splicing"/>
    <isoform>
        <id>P49816-1</id>
        <name>1</name>
        <sequence type="displayed"/>
    </isoform>
    <isoform>
        <id>P49816-2</id>
        <name>2</name>
        <sequence type="described" ref="VSP_004481"/>
    </isoform>
    <isoform>
        <id>P49816-3</id>
        <name>3</name>
        <sequence type="described" ref="VSP_004482"/>
    </isoform>
    <isoform>
        <id>P49816-4</id>
        <name>4</name>
        <sequence type="described" ref="VSP_004481 VSP_004482"/>
    </isoform>
    <text>Additional isoforms seem to exist.</text>
</comment>
<comment type="tissue specificity">
    <text evidence="8">CNS, uterus, heart, skeletal muscle, kidney and spleen.</text>
</comment>
<comment type="PTM">
    <text evidence="1 6">Phosphorylation at Ser-939 and Thr-1466 by PKB/AKT1 in response to insulin signaling and growth factor stimulation inhibits the ability of the TSC-TBC complex to suppress mTORC1 signaling: phosphorylation promotes dissociation of the TSC-TBC complex from lysosomal membranes, leading to activation of mTORC1 by RHEB (PubMed:12172553). Phosphorylation at Ser-1388, Ser-1420 or Ser-1422 does not affect interaction with TSC1 (By similarity). Phosphorylation by AMPK activates it and leads to negative regulation of the mTORC1 complex (By similarity). Phosphorylated at Ser-1800 by RPS6KA1; phosphorylation inhibits TSC2 ability to suppress mTORC1 signaling (By similarity). Phosphorylated by DAPK1 (By similarity).</text>
</comment>
<comment type="PTM">
    <text evidence="1">Ubiquitinated by the DCX(FBXW5) E3 ubiquitin-protein ligase complex, leading to its subsequent degradation. Ubiquitinated by MYCBP2 independently of its phosphorylation status leading to subsequent degradation; association with TSC1 protects from ubiquitination.</text>
</comment>
<comment type="disease">
    <text evidence="8">A germline insertion in Tsc2 is the cause of the Eker rat model of inherited cancer susceptibility. Gives rise to a spectrum of epithelial and nonepithelial neoplasms.</text>
</comment>
<protein>
    <recommendedName>
        <fullName evidence="11">Tuberin</fullName>
    </recommendedName>
    <alternativeName>
        <fullName evidence="10">Tuberous sclerosis 2 protein homolog</fullName>
    </alternativeName>
</protein>
<evidence type="ECO:0000250" key="1">
    <source>
        <dbReference type="UniProtKB" id="P49815"/>
    </source>
</evidence>
<evidence type="ECO:0000250" key="2">
    <source>
        <dbReference type="UniProtKB" id="Q61037"/>
    </source>
</evidence>
<evidence type="ECO:0000255" key="3">
    <source>
        <dbReference type="PROSITE-ProRule" id="PRU00165"/>
    </source>
</evidence>
<evidence type="ECO:0000256" key="4">
    <source>
        <dbReference type="SAM" id="MobiDB-lite"/>
    </source>
</evidence>
<evidence type="ECO:0000269" key="5">
    <source>
    </source>
</evidence>
<evidence type="ECO:0000269" key="6">
    <source>
    </source>
</evidence>
<evidence type="ECO:0000269" key="7">
    <source>
    </source>
</evidence>
<evidence type="ECO:0000269" key="8">
    <source>
    </source>
</evidence>
<evidence type="ECO:0000269" key="9">
    <source>
    </source>
</evidence>
<evidence type="ECO:0000303" key="10">
    <source>
    </source>
</evidence>
<evidence type="ECO:0000303" key="11">
    <source>
    </source>
</evidence>
<evidence type="ECO:0000305" key="12"/>
<evidence type="ECO:0000312" key="13">
    <source>
        <dbReference type="RGD" id="3908"/>
    </source>
</evidence>
<evidence type="ECO:0007744" key="14">
    <source>
    </source>
</evidence>
<gene>
    <name evidence="10 13" type="primary">Tsc2</name>
</gene>
<dbReference type="EMBL" id="U24150">
    <property type="protein sequence ID" value="AAC52289.1"/>
    <property type="molecule type" value="mRNA"/>
</dbReference>
<dbReference type="EMBL" id="D50413">
    <property type="protein sequence ID" value="BAA08914.1"/>
    <property type="molecule type" value="mRNA"/>
</dbReference>
<dbReference type="PIR" id="S57329">
    <property type="entry name" value="S57329"/>
</dbReference>
<dbReference type="RefSeq" id="NP_036812.2">
    <property type="nucleotide sequence ID" value="NM_012680.3"/>
</dbReference>
<dbReference type="RefSeq" id="XP_006245971.2">
    <property type="nucleotide sequence ID" value="XM_006245909.3"/>
</dbReference>
<dbReference type="SMR" id="P49816"/>
<dbReference type="BioGRID" id="246972">
    <property type="interactions" value="9"/>
</dbReference>
<dbReference type="FunCoup" id="P49816">
    <property type="interactions" value="2225"/>
</dbReference>
<dbReference type="IntAct" id="P49816">
    <property type="interactions" value="4"/>
</dbReference>
<dbReference type="MINT" id="P49816"/>
<dbReference type="STRING" id="10116.ENSRNOP00000016221"/>
<dbReference type="iPTMnet" id="P49816"/>
<dbReference type="PhosphoSitePlus" id="P49816"/>
<dbReference type="PaxDb" id="10116-ENSRNOP00000016221"/>
<dbReference type="GeneID" id="24855"/>
<dbReference type="KEGG" id="rno:24855"/>
<dbReference type="UCSC" id="RGD:3908">
    <molecule id="P49816-1"/>
    <property type="organism name" value="rat"/>
</dbReference>
<dbReference type="AGR" id="RGD:3908"/>
<dbReference type="CTD" id="7249"/>
<dbReference type="RGD" id="3908">
    <property type="gene designation" value="Tsc2"/>
</dbReference>
<dbReference type="eggNOG" id="KOG3687">
    <property type="taxonomic scope" value="Eukaryota"/>
</dbReference>
<dbReference type="InParanoid" id="P49816"/>
<dbReference type="OrthoDB" id="48921at9989"/>
<dbReference type="PhylomeDB" id="P49816"/>
<dbReference type="TreeFam" id="TF324484"/>
<dbReference type="Reactome" id="R-RNO-1632852">
    <property type="pathway name" value="Macroautophagy"/>
</dbReference>
<dbReference type="Reactome" id="R-RNO-165181">
    <property type="pathway name" value="Inhibition of TSC complex formation by PKB"/>
</dbReference>
<dbReference type="Reactome" id="R-RNO-198323">
    <property type="pathway name" value="AKT phosphorylates targets in the cytosol"/>
</dbReference>
<dbReference type="Reactome" id="R-RNO-380972">
    <property type="pathway name" value="Energy dependent regulation of mTOR by LKB1-AMPK"/>
</dbReference>
<dbReference type="Reactome" id="R-RNO-5628897">
    <property type="pathway name" value="TP53 Regulates Metabolic Genes"/>
</dbReference>
<dbReference type="Reactome" id="R-RNO-8854214">
    <property type="pathway name" value="TBC/RABGAPs"/>
</dbReference>
<dbReference type="PRO" id="PR:P49816"/>
<dbReference type="Proteomes" id="UP000002494">
    <property type="component" value="Unplaced"/>
</dbReference>
<dbReference type="GO" id="GO:0005901">
    <property type="term" value="C:caveola"/>
    <property type="evidence" value="ECO:0000314"/>
    <property type="project" value="RGD"/>
</dbReference>
<dbReference type="GO" id="GO:0042995">
    <property type="term" value="C:cell projection"/>
    <property type="evidence" value="ECO:0000314"/>
    <property type="project" value="RGD"/>
</dbReference>
<dbReference type="GO" id="GO:0005737">
    <property type="term" value="C:cytoplasm"/>
    <property type="evidence" value="ECO:0000266"/>
    <property type="project" value="RGD"/>
</dbReference>
<dbReference type="GO" id="GO:0005829">
    <property type="term" value="C:cytosol"/>
    <property type="evidence" value="ECO:0000250"/>
    <property type="project" value="UniProtKB"/>
</dbReference>
<dbReference type="GO" id="GO:0030425">
    <property type="term" value="C:dendrite"/>
    <property type="evidence" value="ECO:0000314"/>
    <property type="project" value="RGD"/>
</dbReference>
<dbReference type="GO" id="GO:0098978">
    <property type="term" value="C:glutamatergic synapse"/>
    <property type="evidence" value="ECO:0000314"/>
    <property type="project" value="SynGO"/>
</dbReference>
<dbReference type="GO" id="GO:0005794">
    <property type="term" value="C:Golgi apparatus"/>
    <property type="evidence" value="ECO:0000266"/>
    <property type="project" value="RGD"/>
</dbReference>
<dbReference type="GO" id="GO:0030426">
    <property type="term" value="C:growth cone"/>
    <property type="evidence" value="ECO:0000314"/>
    <property type="project" value="RGD"/>
</dbReference>
<dbReference type="GO" id="GO:0005765">
    <property type="term" value="C:lysosomal membrane"/>
    <property type="evidence" value="ECO:0000250"/>
    <property type="project" value="UniProtKB"/>
</dbReference>
<dbReference type="GO" id="GO:0005764">
    <property type="term" value="C:lysosome"/>
    <property type="evidence" value="ECO:0000266"/>
    <property type="project" value="RGD"/>
</dbReference>
<dbReference type="GO" id="GO:0016020">
    <property type="term" value="C:membrane"/>
    <property type="evidence" value="ECO:0000266"/>
    <property type="project" value="RGD"/>
</dbReference>
<dbReference type="GO" id="GO:0043025">
    <property type="term" value="C:neuronal cell body"/>
    <property type="evidence" value="ECO:0000314"/>
    <property type="project" value="RGD"/>
</dbReference>
<dbReference type="GO" id="GO:0005634">
    <property type="term" value="C:nucleus"/>
    <property type="evidence" value="ECO:0000266"/>
    <property type="project" value="RGD"/>
</dbReference>
<dbReference type="GO" id="GO:0048471">
    <property type="term" value="C:perinuclear region of cytoplasm"/>
    <property type="evidence" value="ECO:0000314"/>
    <property type="project" value="RGD"/>
</dbReference>
<dbReference type="GO" id="GO:0014069">
    <property type="term" value="C:postsynaptic density"/>
    <property type="evidence" value="ECO:0000266"/>
    <property type="project" value="RGD"/>
</dbReference>
<dbReference type="GO" id="GO:0045202">
    <property type="term" value="C:synapse"/>
    <property type="evidence" value="ECO:0000266"/>
    <property type="project" value="RGD"/>
</dbReference>
<dbReference type="GO" id="GO:0033596">
    <property type="term" value="C:TSC1-TSC2 complex"/>
    <property type="evidence" value="ECO:0000250"/>
    <property type="project" value="UniProtKB"/>
</dbReference>
<dbReference type="GO" id="GO:0071889">
    <property type="term" value="F:14-3-3 protein binding"/>
    <property type="evidence" value="ECO:0000266"/>
    <property type="project" value="RGD"/>
</dbReference>
<dbReference type="GO" id="GO:0005096">
    <property type="term" value="F:GTPase activator activity"/>
    <property type="evidence" value="ECO:0000314"/>
    <property type="project" value="RGD"/>
</dbReference>
<dbReference type="GO" id="GO:0051879">
    <property type="term" value="F:Hsp90 protein binding"/>
    <property type="evidence" value="ECO:0000266"/>
    <property type="project" value="RGD"/>
</dbReference>
<dbReference type="GO" id="GO:0019902">
    <property type="term" value="F:phosphatase binding"/>
    <property type="evidence" value="ECO:0000250"/>
    <property type="project" value="UniProtKB"/>
</dbReference>
<dbReference type="GO" id="GO:0042803">
    <property type="term" value="F:protein homodimerization activity"/>
    <property type="evidence" value="ECO:0000266"/>
    <property type="project" value="RGD"/>
</dbReference>
<dbReference type="GO" id="GO:0044877">
    <property type="term" value="F:protein-containing complex binding"/>
    <property type="evidence" value="ECO:0000353"/>
    <property type="project" value="RGD"/>
</dbReference>
<dbReference type="GO" id="GO:0031267">
    <property type="term" value="F:small GTPase binding"/>
    <property type="evidence" value="ECO:0000266"/>
    <property type="project" value="RGD"/>
</dbReference>
<dbReference type="GO" id="GO:0043276">
    <property type="term" value="P:anoikis"/>
    <property type="evidence" value="ECO:0000266"/>
    <property type="project" value="RGD"/>
</dbReference>
<dbReference type="GO" id="GO:0042100">
    <property type="term" value="P:B cell proliferation"/>
    <property type="evidence" value="ECO:0000266"/>
    <property type="project" value="RGD"/>
</dbReference>
<dbReference type="GO" id="GO:0008283">
    <property type="term" value="P:cell population proliferation"/>
    <property type="evidence" value="ECO:0000266"/>
    <property type="project" value="RGD"/>
</dbReference>
<dbReference type="GO" id="GO:0030030">
    <property type="term" value="P:cell projection organization"/>
    <property type="evidence" value="ECO:0000315"/>
    <property type="project" value="MGI"/>
</dbReference>
<dbReference type="GO" id="GO:0032869">
    <property type="term" value="P:cellular response to insulin stimulus"/>
    <property type="evidence" value="ECO:0000266"/>
    <property type="project" value="RGD"/>
</dbReference>
<dbReference type="GO" id="GO:0009267">
    <property type="term" value="P:cellular response to starvation"/>
    <property type="evidence" value="ECO:0000250"/>
    <property type="project" value="UniProtKB"/>
</dbReference>
<dbReference type="GO" id="GO:0046323">
    <property type="term" value="P:D-glucose import"/>
    <property type="evidence" value="ECO:0000266"/>
    <property type="project" value="RGD"/>
</dbReference>
<dbReference type="GO" id="GO:0030010">
    <property type="term" value="P:establishment of cell polarity"/>
    <property type="evidence" value="ECO:0000315"/>
    <property type="project" value="RGD"/>
</dbReference>
<dbReference type="GO" id="GO:0098976">
    <property type="term" value="P:excitatory chemical synaptic transmission"/>
    <property type="evidence" value="ECO:0000266"/>
    <property type="project" value="RGD"/>
</dbReference>
<dbReference type="GO" id="GO:0007507">
    <property type="term" value="P:heart development"/>
    <property type="evidence" value="ECO:0000266"/>
    <property type="project" value="RGD"/>
</dbReference>
<dbReference type="GO" id="GO:0098977">
    <property type="term" value="P:inhibitory chemical synaptic transmission"/>
    <property type="evidence" value="ECO:0000266"/>
    <property type="project" value="RGD"/>
</dbReference>
<dbReference type="GO" id="GO:0050771">
    <property type="term" value="P:negative regulation of axonogenesis"/>
    <property type="evidence" value="ECO:0000315"/>
    <property type="project" value="RGD"/>
</dbReference>
<dbReference type="GO" id="GO:0030889">
    <property type="term" value="P:negative regulation of B cell proliferation"/>
    <property type="evidence" value="ECO:0000266"/>
    <property type="project" value="RGD"/>
</dbReference>
<dbReference type="GO" id="GO:0008285">
    <property type="term" value="P:negative regulation of cell population proliferation"/>
    <property type="evidence" value="ECO:0000315"/>
    <property type="project" value="RGD"/>
</dbReference>
<dbReference type="GO" id="GO:0045792">
    <property type="term" value="P:negative regulation of cell size"/>
    <property type="evidence" value="ECO:0000315"/>
    <property type="project" value="MGI"/>
</dbReference>
<dbReference type="GO" id="GO:0050680">
    <property type="term" value="P:negative regulation of epithelial cell proliferation"/>
    <property type="evidence" value="ECO:0000314"/>
    <property type="project" value="RGD"/>
</dbReference>
<dbReference type="GO" id="GO:0010719">
    <property type="term" value="P:negative regulation of epithelial to mesenchymal transition"/>
    <property type="evidence" value="ECO:0000315"/>
    <property type="project" value="RGD"/>
</dbReference>
<dbReference type="GO" id="GO:0048147">
    <property type="term" value="P:negative regulation of fibroblast proliferation"/>
    <property type="evidence" value="ECO:0000314"/>
    <property type="project" value="RGD"/>
</dbReference>
<dbReference type="GO" id="GO:0046627">
    <property type="term" value="P:negative regulation of insulin receptor signaling pathway"/>
    <property type="evidence" value="ECO:0000318"/>
    <property type="project" value="GO_Central"/>
</dbReference>
<dbReference type="GO" id="GO:0016242">
    <property type="term" value="P:negative regulation of macroautophagy"/>
    <property type="evidence" value="ECO:0000315"/>
    <property type="project" value="RGD"/>
</dbReference>
<dbReference type="GO" id="GO:0051898">
    <property type="term" value="P:negative regulation of phosphatidylinositol 3-kinase/protein kinase B signal transduction"/>
    <property type="evidence" value="ECO:0000266"/>
    <property type="project" value="RGD"/>
</dbReference>
<dbReference type="GO" id="GO:0048550">
    <property type="term" value="P:negative regulation of pinocytosis"/>
    <property type="evidence" value="ECO:0000315"/>
    <property type="project" value="RGD"/>
</dbReference>
<dbReference type="GO" id="GO:0042130">
    <property type="term" value="P:negative regulation of T cell proliferation"/>
    <property type="evidence" value="ECO:0000266"/>
    <property type="project" value="RGD"/>
</dbReference>
<dbReference type="GO" id="GO:0032007">
    <property type="term" value="P:negative regulation of TOR signaling"/>
    <property type="evidence" value="ECO:0000314"/>
    <property type="project" value="RGD"/>
</dbReference>
<dbReference type="GO" id="GO:1904262">
    <property type="term" value="P:negative regulation of TORC1 signaling"/>
    <property type="evidence" value="ECO:0000250"/>
    <property type="project" value="UniProtKB"/>
</dbReference>
<dbReference type="GO" id="GO:1905563">
    <property type="term" value="P:negative regulation of vascular endothelial cell proliferation"/>
    <property type="evidence" value="ECO:0000315"/>
    <property type="project" value="RGD"/>
</dbReference>
<dbReference type="GO" id="GO:0030178">
    <property type="term" value="P:negative regulation of Wnt signaling pathway"/>
    <property type="evidence" value="ECO:0000314"/>
    <property type="project" value="RGD"/>
</dbReference>
<dbReference type="GO" id="GO:0001843">
    <property type="term" value="P:neural tube closure"/>
    <property type="evidence" value="ECO:0000266"/>
    <property type="project" value="RGD"/>
</dbReference>
<dbReference type="GO" id="GO:0050918">
    <property type="term" value="P:positive chemotaxis"/>
    <property type="evidence" value="ECO:0000266"/>
    <property type="project" value="RGD"/>
</dbReference>
<dbReference type="GO" id="GO:0010508">
    <property type="term" value="P:positive regulation of autophagy"/>
    <property type="evidence" value="ECO:0000266"/>
    <property type="project" value="RGD"/>
</dbReference>
<dbReference type="GO" id="GO:0045785">
    <property type="term" value="P:positive regulation of cell adhesion"/>
    <property type="evidence" value="ECO:0000315"/>
    <property type="project" value="RGD"/>
</dbReference>
<dbReference type="GO" id="GO:0060999">
    <property type="term" value="P:positive regulation of dendritic spine development"/>
    <property type="evidence" value="ECO:0000315"/>
    <property type="project" value="RGD"/>
</dbReference>
<dbReference type="GO" id="GO:0010763">
    <property type="term" value="P:positive regulation of fibroblast migration"/>
    <property type="evidence" value="ECO:0000315"/>
    <property type="project" value="RGD"/>
</dbReference>
<dbReference type="GO" id="GO:0046628">
    <property type="term" value="P:positive regulation of insulin receptor signaling pathway"/>
    <property type="evidence" value="ECO:0000266"/>
    <property type="project" value="RGD"/>
</dbReference>
<dbReference type="GO" id="GO:0016239">
    <property type="term" value="P:positive regulation of macroautophagy"/>
    <property type="evidence" value="ECO:0000266"/>
    <property type="project" value="RGD"/>
</dbReference>
<dbReference type="GO" id="GO:0010976">
    <property type="term" value="P:positive regulation of neuron projection development"/>
    <property type="evidence" value="ECO:0000315"/>
    <property type="project" value="RGD"/>
</dbReference>
<dbReference type="GO" id="GO:0045944">
    <property type="term" value="P:positive regulation of transcription by RNA polymerase II"/>
    <property type="evidence" value="ECO:0000266"/>
    <property type="project" value="RGD"/>
</dbReference>
<dbReference type="GO" id="GO:0006606">
    <property type="term" value="P:protein import into nucleus"/>
    <property type="evidence" value="ECO:0000266"/>
    <property type="project" value="RGD"/>
</dbReference>
<dbReference type="GO" id="GO:0008104">
    <property type="term" value="P:protein localization"/>
    <property type="evidence" value="ECO:0000266"/>
    <property type="project" value="RGD"/>
</dbReference>
<dbReference type="GO" id="GO:0034394">
    <property type="term" value="P:protein localization to cell surface"/>
    <property type="evidence" value="ECO:0000315"/>
    <property type="project" value="RGD"/>
</dbReference>
<dbReference type="GO" id="GO:0044861">
    <property type="term" value="P:protein transport into plasma membrane raft"/>
    <property type="evidence" value="ECO:0000266"/>
    <property type="project" value="RGD"/>
</dbReference>
<dbReference type="GO" id="GO:0051726">
    <property type="term" value="P:regulation of cell cycle"/>
    <property type="evidence" value="ECO:0000318"/>
    <property type="project" value="GO_Central"/>
</dbReference>
<dbReference type="GO" id="GO:0030100">
    <property type="term" value="P:regulation of endocytosis"/>
    <property type="evidence" value="ECO:0000266"/>
    <property type="project" value="RGD"/>
</dbReference>
<dbReference type="GO" id="GO:0046626">
    <property type="term" value="P:regulation of insulin receptor signaling pathway"/>
    <property type="evidence" value="ECO:0000266"/>
    <property type="project" value="RGD"/>
</dbReference>
<dbReference type="GO" id="GO:0099175">
    <property type="term" value="P:regulation of postsynapse organization"/>
    <property type="evidence" value="ECO:0000314"/>
    <property type="project" value="SynGO"/>
</dbReference>
<dbReference type="GO" id="GO:0051056">
    <property type="term" value="P:regulation of small GTPase mediated signal transduction"/>
    <property type="evidence" value="ECO:0007669"/>
    <property type="project" value="InterPro"/>
</dbReference>
<dbReference type="GO" id="GO:0001666">
    <property type="term" value="P:response to hypoxia"/>
    <property type="evidence" value="ECO:0000266"/>
    <property type="project" value="RGD"/>
</dbReference>
<dbReference type="GO" id="GO:0035176">
    <property type="term" value="P:social behavior"/>
    <property type="evidence" value="ECO:0000315"/>
    <property type="project" value="RGD"/>
</dbReference>
<dbReference type="GO" id="GO:0042098">
    <property type="term" value="P:T cell proliferation"/>
    <property type="evidence" value="ECO:0000266"/>
    <property type="project" value="RGD"/>
</dbReference>
<dbReference type="GO" id="GO:0006366">
    <property type="term" value="P:transcription by RNA polymerase II"/>
    <property type="evidence" value="ECO:0000266"/>
    <property type="project" value="RGD"/>
</dbReference>
<dbReference type="FunFam" id="3.40.50.11210:FF:000004">
    <property type="entry name" value="Tuberin isoform X3"/>
    <property type="match status" value="1"/>
</dbReference>
<dbReference type="Gene3D" id="1.25.10.10">
    <property type="entry name" value="Leucine-rich Repeat Variant"/>
    <property type="match status" value="1"/>
</dbReference>
<dbReference type="Gene3D" id="3.40.50.11210">
    <property type="entry name" value="Rap/Ran-GAP"/>
    <property type="match status" value="1"/>
</dbReference>
<dbReference type="InterPro" id="IPR011989">
    <property type="entry name" value="ARM-like"/>
</dbReference>
<dbReference type="InterPro" id="IPR016024">
    <property type="entry name" value="ARM-type_fold"/>
</dbReference>
<dbReference type="InterPro" id="IPR035974">
    <property type="entry name" value="Rap/Ran-GAP_sf"/>
</dbReference>
<dbReference type="InterPro" id="IPR000331">
    <property type="entry name" value="Rap/Ran_GAP_dom"/>
</dbReference>
<dbReference type="InterPro" id="IPR003913">
    <property type="entry name" value="Tuberin"/>
</dbReference>
<dbReference type="InterPro" id="IPR018515">
    <property type="entry name" value="Tuberin-type_domain"/>
</dbReference>
<dbReference type="InterPro" id="IPR027107">
    <property type="entry name" value="Tuberin/Ral-act_asu"/>
</dbReference>
<dbReference type="InterPro" id="IPR024584">
    <property type="entry name" value="Tuberin_N"/>
</dbReference>
<dbReference type="PANTHER" id="PTHR10063">
    <property type="entry name" value="TUBERIN"/>
    <property type="match status" value="1"/>
</dbReference>
<dbReference type="PANTHER" id="PTHR10063:SF0">
    <property type="entry name" value="TUBERIN"/>
    <property type="match status" value="1"/>
</dbReference>
<dbReference type="Pfam" id="PF11864">
    <property type="entry name" value="DUF3384"/>
    <property type="match status" value="1"/>
</dbReference>
<dbReference type="Pfam" id="PF02145">
    <property type="entry name" value="Rap_GAP"/>
    <property type="match status" value="1"/>
</dbReference>
<dbReference type="Pfam" id="PF03542">
    <property type="entry name" value="Tuberin"/>
    <property type="match status" value="1"/>
</dbReference>
<dbReference type="PRINTS" id="PR01431">
    <property type="entry name" value="TUBERIN"/>
</dbReference>
<dbReference type="SUPFAM" id="SSF48371">
    <property type="entry name" value="ARM repeat"/>
    <property type="match status" value="1"/>
</dbReference>
<dbReference type="SUPFAM" id="SSF111347">
    <property type="entry name" value="Rap/Ran-GAP"/>
    <property type="match status" value="1"/>
</dbReference>
<dbReference type="PROSITE" id="PS50085">
    <property type="entry name" value="RAPGAP"/>
    <property type="match status" value="1"/>
</dbReference>
<accession>P49816</accession>
<reference key="1">
    <citation type="journal article" date="1995" name="Cell Growth Differ.">
        <title>Identification of tuberous sclerosis 2 messenger RNA splice variants that are conserved and differentially expressed in rat and human tissues.</title>
        <authorList>
            <person name="Xiao G.-H."/>
            <person name="Jin F."/>
            <person name="Yeung R.S."/>
        </authorList>
    </citation>
    <scope>NUCLEOTIDE SEQUENCE [MRNA] (ISOFORMS 1; 2; 3 AND 4)</scope>
    <scope>TISSUE SPECIFICITY</scope>
    <scope>DISEASE</scope>
    <source>
        <strain>Wistar</strain>
        <tissue>Kidney</tissue>
    </source>
</reference>
<reference key="2">
    <citation type="journal article" date="1995" name="Nucleic Acids Res.">
        <title>cDNA structure, alternative splicing and exon-intron organization of the predisposing tuberous sclerosis (Tsc2) gene of the Eker rat model.</title>
        <authorList>
            <person name="Kobayashi T."/>
            <person name="Nishizawa M."/>
            <person name="Hirayama Y."/>
            <person name="Kobayashi E."/>
            <person name="Hino O."/>
        </authorList>
    </citation>
    <scope>NUCLEOTIDE SEQUENCE [MRNA] (ISOFORM 1)</scope>
    <source>
        <strain>Long Evans</strain>
        <tissue>Brain</tissue>
        <tissue>Kidney</tissue>
    </source>
</reference>
<reference key="3">
    <citation type="journal article" date="1997" name="J. Biol. Chem.">
        <title>The tuberous sclerosis 2 gene product, tuberin, functions as a Rab5 GTPase activating protein (GAP) in modulating endocytosis.</title>
        <authorList>
            <person name="Xiao G.-H."/>
            <person name="Shoarinejad F."/>
            <person name="Jin F."/>
            <person name="Golemis E.A."/>
            <person name="Yeung R.S."/>
        </authorList>
    </citation>
    <scope>FUNCTION</scope>
    <scope>INTERACTION WITH RABEP1</scope>
</reference>
<reference key="4">
    <citation type="journal article" date="1999" name="Cancer Res.">
        <title>Isolation and characterization of a rat homologue of the human tuberous sclerosis 1 gene (Tsc1) and analysis of its mutations in rat renal carcinomas.</title>
        <authorList>
            <person name="Satake N."/>
            <person name="Kobayashi T."/>
            <person name="Kobayashi E."/>
            <person name="Izumi K."/>
            <person name="Hino O."/>
        </authorList>
    </citation>
    <scope>MUTAGENESIS OF ASN-314 AND LEU-713</scope>
</reference>
<reference key="5">
    <citation type="journal article" date="2002" name="Nat. Cell Biol.">
        <title>TSC2 is phosphorylated and inhibited by Akt and suppresses mTOR signalling.</title>
        <authorList>
            <person name="Inoki K."/>
            <person name="Li Y."/>
            <person name="Zhu T."/>
            <person name="Wu J."/>
            <person name="Guan K.L."/>
        </authorList>
    </citation>
    <scope>FUNCTION</scope>
    <scope>PHOSPHORYLATION AT SER-939; SER-1130; SER-1132; SER-1422 AND THR-1466</scope>
    <scope>MUTAGENESIS OF SER-939; 1130-SER--SER-1132 AND SER-1422</scope>
</reference>
<reference key="6">
    <citation type="journal article" date="2006" name="Cancer Res.">
        <title>Regulation of microtubule-dependent protein transport by the TSC2/mammalian target of rapamycin pathway.</title>
        <authorList>
            <person name="Jiang X."/>
            <person name="Yeung R.S."/>
        </authorList>
    </citation>
    <scope>FUNCTION</scope>
</reference>
<reference key="7">
    <citation type="journal article" date="2012" name="Nat. Commun.">
        <title>Quantitative maps of protein phosphorylation sites across 14 different rat organs and tissues.</title>
        <authorList>
            <person name="Lundby A."/>
            <person name="Secher A."/>
            <person name="Lage K."/>
            <person name="Nordsborg N.B."/>
            <person name="Dmytriyev A."/>
            <person name="Lundby C."/>
            <person name="Olsen J.V."/>
        </authorList>
    </citation>
    <scope>PHOSPHORYLATION [LARGE SCALE ANALYSIS] AT SER-1389 AND SER-1413</scope>
    <scope>IDENTIFICATION BY MASS SPECTROMETRY [LARGE SCALE ANALYSIS]</scope>
</reference>
<keyword id="KW-0025">Alternative splicing</keyword>
<keyword id="KW-0963">Cytoplasm</keyword>
<keyword id="KW-0343">GTPase activation</keyword>
<keyword id="KW-0458">Lysosome</keyword>
<keyword id="KW-0472">Membrane</keyword>
<keyword id="KW-0597">Phosphoprotein</keyword>
<keyword id="KW-1185">Reference proteome</keyword>
<keyword id="KW-0043">Tumor suppressor</keyword>
<keyword id="KW-0832">Ubl conjugation</keyword>
<name>TSC2_RAT</name>
<organism>
    <name type="scientific">Rattus norvegicus</name>
    <name type="common">Rat</name>
    <dbReference type="NCBI Taxonomy" id="10116"/>
    <lineage>
        <taxon>Eukaryota</taxon>
        <taxon>Metazoa</taxon>
        <taxon>Chordata</taxon>
        <taxon>Craniata</taxon>
        <taxon>Vertebrata</taxon>
        <taxon>Euteleostomi</taxon>
        <taxon>Mammalia</taxon>
        <taxon>Eutheria</taxon>
        <taxon>Euarchontoglires</taxon>
        <taxon>Glires</taxon>
        <taxon>Rodentia</taxon>
        <taxon>Myomorpha</taxon>
        <taxon>Muroidea</taxon>
        <taxon>Muridae</taxon>
        <taxon>Murinae</taxon>
        <taxon>Rattus</taxon>
    </lineage>
</organism>